<keyword id="KW-0004">4Fe-4S</keyword>
<keyword id="KW-0150">Chloroplast</keyword>
<keyword id="KW-0249">Electron transport</keyword>
<keyword id="KW-0408">Iron</keyword>
<keyword id="KW-0411">Iron-sulfur</keyword>
<keyword id="KW-0472">Membrane</keyword>
<keyword id="KW-0479">Metal-binding</keyword>
<keyword id="KW-0560">Oxidoreductase</keyword>
<keyword id="KW-0602">Photosynthesis</keyword>
<keyword id="KW-0603">Photosystem I</keyword>
<keyword id="KW-0934">Plastid</keyword>
<keyword id="KW-0677">Repeat</keyword>
<keyword id="KW-0793">Thylakoid</keyword>
<keyword id="KW-0813">Transport</keyword>
<name>PSAC_MARPO</name>
<proteinExistence type="inferred from homology"/>
<accession>P06251</accession>
<gene>
    <name evidence="2" type="primary">psaC</name>
    <name type="synonym">frxA</name>
</gene>
<feature type="initiator methionine" description="Removed" evidence="1">
    <location>
        <position position="1"/>
    </location>
</feature>
<feature type="chain" id="PRO_0000061988" description="Photosystem I iron-sulfur center">
    <location>
        <begin position="2"/>
        <end position="81"/>
    </location>
</feature>
<feature type="domain" description="4Fe-4S ferredoxin-type 1" evidence="2">
    <location>
        <begin position="2"/>
        <end position="31"/>
    </location>
</feature>
<feature type="domain" description="4Fe-4S ferredoxin-type 2" evidence="2">
    <location>
        <begin position="39"/>
        <end position="68"/>
    </location>
</feature>
<feature type="binding site" evidence="2">
    <location>
        <position position="11"/>
    </location>
    <ligand>
        <name>[4Fe-4S] cluster</name>
        <dbReference type="ChEBI" id="CHEBI:49883"/>
        <label>1</label>
    </ligand>
</feature>
<feature type="binding site" evidence="2">
    <location>
        <position position="14"/>
    </location>
    <ligand>
        <name>[4Fe-4S] cluster</name>
        <dbReference type="ChEBI" id="CHEBI:49883"/>
        <label>1</label>
    </ligand>
</feature>
<feature type="binding site" evidence="2">
    <location>
        <position position="17"/>
    </location>
    <ligand>
        <name>[4Fe-4S] cluster</name>
        <dbReference type="ChEBI" id="CHEBI:49883"/>
        <label>1</label>
    </ligand>
</feature>
<feature type="binding site" evidence="2">
    <location>
        <position position="21"/>
    </location>
    <ligand>
        <name>[4Fe-4S] cluster</name>
        <dbReference type="ChEBI" id="CHEBI:49883"/>
        <label>2</label>
    </ligand>
</feature>
<feature type="binding site" evidence="2">
    <location>
        <position position="48"/>
    </location>
    <ligand>
        <name>[4Fe-4S] cluster</name>
        <dbReference type="ChEBI" id="CHEBI:49883"/>
        <label>2</label>
    </ligand>
</feature>
<feature type="binding site" evidence="2">
    <location>
        <position position="51"/>
    </location>
    <ligand>
        <name>[4Fe-4S] cluster</name>
        <dbReference type="ChEBI" id="CHEBI:49883"/>
        <label>2</label>
    </ligand>
</feature>
<feature type="binding site" evidence="2">
    <location>
        <position position="54"/>
    </location>
    <ligand>
        <name>[4Fe-4S] cluster</name>
        <dbReference type="ChEBI" id="CHEBI:49883"/>
        <label>2</label>
    </ligand>
</feature>
<feature type="binding site" evidence="2">
    <location>
        <position position="58"/>
    </location>
    <ligand>
        <name>[4Fe-4S] cluster</name>
        <dbReference type="ChEBI" id="CHEBI:49883"/>
        <label>1</label>
    </ligand>
</feature>
<protein>
    <recommendedName>
        <fullName evidence="2">Photosystem I iron-sulfur center</fullName>
        <ecNumber evidence="2">1.97.1.12</ecNumber>
    </recommendedName>
    <alternativeName>
        <fullName evidence="2">9 kDa polypeptide</fullName>
    </alternativeName>
    <alternativeName>
        <fullName evidence="2">PSI-C</fullName>
    </alternativeName>
    <alternativeName>
        <fullName evidence="2">Photosystem I subunit VII</fullName>
    </alternativeName>
    <alternativeName>
        <fullName evidence="2">PsaC</fullName>
    </alternativeName>
</protein>
<organism>
    <name type="scientific">Marchantia polymorpha</name>
    <name type="common">Common liverwort</name>
    <name type="synonym">Marchantia aquatica</name>
    <dbReference type="NCBI Taxonomy" id="3197"/>
    <lineage>
        <taxon>Eukaryota</taxon>
        <taxon>Viridiplantae</taxon>
        <taxon>Streptophyta</taxon>
        <taxon>Embryophyta</taxon>
        <taxon>Marchantiophyta</taxon>
        <taxon>Marchantiopsida</taxon>
        <taxon>Marchantiidae</taxon>
        <taxon>Marchantiales</taxon>
        <taxon>Marchantiaceae</taxon>
        <taxon>Marchantia</taxon>
    </lineage>
</organism>
<comment type="function">
    <text evidence="2">Apoprotein for the two 4Fe-4S centers FA and FB of photosystem I (PSI); essential for photochemical activity. FB is the terminal electron acceptor of PSI, donating electrons to ferredoxin. The C-terminus interacts with PsaA/B/D and helps assemble the protein into the PSI complex. Required for binding of PsaD and PsaE to PSI. PSI is a plastocyanin-ferredoxin oxidoreductase, converting photonic excitation into a charge separation, which transfers an electron from the donor P700 chlorophyll pair to the spectroscopically characterized acceptors A0, A1, FX, FA and FB in turn.</text>
</comment>
<comment type="catalytic activity">
    <reaction evidence="2">
        <text>reduced [plastocyanin] + hnu + oxidized [2Fe-2S]-[ferredoxin] = oxidized [plastocyanin] + reduced [2Fe-2S]-[ferredoxin]</text>
        <dbReference type="Rhea" id="RHEA:30407"/>
        <dbReference type="Rhea" id="RHEA-COMP:10000"/>
        <dbReference type="Rhea" id="RHEA-COMP:10001"/>
        <dbReference type="Rhea" id="RHEA-COMP:10039"/>
        <dbReference type="Rhea" id="RHEA-COMP:10040"/>
        <dbReference type="ChEBI" id="CHEBI:29036"/>
        <dbReference type="ChEBI" id="CHEBI:30212"/>
        <dbReference type="ChEBI" id="CHEBI:33737"/>
        <dbReference type="ChEBI" id="CHEBI:33738"/>
        <dbReference type="ChEBI" id="CHEBI:49552"/>
        <dbReference type="EC" id="1.97.1.12"/>
    </reaction>
</comment>
<comment type="cofactor">
    <cofactor evidence="2">
        <name>[4Fe-4S] cluster</name>
        <dbReference type="ChEBI" id="CHEBI:49883"/>
    </cofactor>
    <text evidence="2">Binds 2 [4Fe-4S] clusters. Cluster 2 is most probably the spectroscopically characterized electron acceptor FA and cluster 1 is most probably FB.</text>
</comment>
<comment type="subunit">
    <text evidence="2">The eukaryotic PSI reaction center is composed of at least 11 subunits.</text>
</comment>
<comment type="subcellular location">
    <subcellularLocation>
        <location evidence="2">Plastid</location>
        <location evidence="2">Chloroplast thylakoid membrane</location>
        <topology evidence="2">Peripheral membrane protein</topology>
        <orientation evidence="2">Stromal side</orientation>
    </subcellularLocation>
</comment>
<sequence>MAHAVKIYDTCIGCTQCVRACPTDVLEMIPWDGCKANQIASAPRTEDCVGCKRCESRCPTDFLSVRVYLGNETTRSMGLSY</sequence>
<reference key="1">
    <citation type="journal article" date="1988" name="J. Mol. Biol.">
        <title>Structure and organization of Marchantia polymorpha chloroplast genome. IV. Inverted repeat and small single copy regions.</title>
        <authorList>
            <person name="Kohchi T."/>
            <person name="Shirai H."/>
            <person name="Fukuzawa H."/>
            <person name="Sano T."/>
            <person name="Komano T."/>
            <person name="Umesono K."/>
            <person name="Inokuchi H."/>
            <person name="Ozeki H."/>
            <person name="Ohyama K."/>
        </authorList>
    </citation>
    <scope>NUCLEOTIDE SEQUENCE [GENOMIC DNA]</scope>
</reference>
<reference key="2">
    <citation type="journal article" date="1986" name="Nature">
        <title>Chloroplast gene organization deduced from complete sequence of liverwort Marchantia polymorpha chloroplast DNA.</title>
        <authorList>
            <person name="Ohyama K."/>
            <person name="Fukuzawa H."/>
            <person name="Kohchi T."/>
            <person name="Shirai H."/>
            <person name="Sano T."/>
            <person name="Sano S."/>
            <person name="Umesono K."/>
            <person name="Shiki Y."/>
            <person name="Takeuchi M."/>
            <person name="Chang Z."/>
            <person name="Aota S."/>
            <person name="Inokuchi H."/>
            <person name="Ozeki H."/>
        </authorList>
    </citation>
    <scope>NUCLEOTIDE SEQUENCE [LARGE SCALE GENOMIC DNA]</scope>
</reference>
<dbReference type="EC" id="1.97.1.12" evidence="2"/>
<dbReference type="EMBL" id="X04465">
    <property type="protein sequence ID" value="CAA28135.1"/>
    <property type="molecule type" value="Genomic_DNA"/>
</dbReference>
<dbReference type="PIR" id="S01527">
    <property type="entry name" value="FELVA"/>
</dbReference>
<dbReference type="RefSeq" id="NP_039349.1">
    <property type="nucleotide sequence ID" value="NC_001319.1"/>
</dbReference>
<dbReference type="SMR" id="P06251"/>
<dbReference type="GeneID" id="2702670"/>
<dbReference type="GO" id="GO:0009535">
    <property type="term" value="C:chloroplast thylakoid membrane"/>
    <property type="evidence" value="ECO:0007669"/>
    <property type="project" value="UniProtKB-SubCell"/>
</dbReference>
<dbReference type="GO" id="GO:0009522">
    <property type="term" value="C:photosystem I"/>
    <property type="evidence" value="ECO:0007669"/>
    <property type="project" value="UniProtKB-KW"/>
</dbReference>
<dbReference type="GO" id="GO:0051539">
    <property type="term" value="F:4 iron, 4 sulfur cluster binding"/>
    <property type="evidence" value="ECO:0007669"/>
    <property type="project" value="UniProtKB-KW"/>
</dbReference>
<dbReference type="GO" id="GO:0009055">
    <property type="term" value="F:electron transfer activity"/>
    <property type="evidence" value="ECO:0007669"/>
    <property type="project" value="UniProtKB-UniRule"/>
</dbReference>
<dbReference type="GO" id="GO:0046872">
    <property type="term" value="F:metal ion binding"/>
    <property type="evidence" value="ECO:0007669"/>
    <property type="project" value="UniProtKB-KW"/>
</dbReference>
<dbReference type="GO" id="GO:0016491">
    <property type="term" value="F:oxidoreductase activity"/>
    <property type="evidence" value="ECO:0007669"/>
    <property type="project" value="UniProtKB-KW"/>
</dbReference>
<dbReference type="GO" id="GO:0009773">
    <property type="term" value="P:photosynthetic electron transport in photosystem I"/>
    <property type="evidence" value="ECO:0007669"/>
    <property type="project" value="InterPro"/>
</dbReference>
<dbReference type="FunFam" id="3.30.70.20:FF:000001">
    <property type="entry name" value="Photosystem I iron-sulfur center"/>
    <property type="match status" value="1"/>
</dbReference>
<dbReference type="Gene3D" id="3.30.70.20">
    <property type="match status" value="1"/>
</dbReference>
<dbReference type="HAMAP" id="MF_01303">
    <property type="entry name" value="PSI_PsaC"/>
    <property type="match status" value="1"/>
</dbReference>
<dbReference type="InterPro" id="IPR017896">
    <property type="entry name" value="4Fe4S_Fe-S-bd"/>
</dbReference>
<dbReference type="InterPro" id="IPR017900">
    <property type="entry name" value="4Fe4S_Fe_S_CS"/>
</dbReference>
<dbReference type="InterPro" id="IPR050157">
    <property type="entry name" value="PSI_iron-sulfur_center"/>
</dbReference>
<dbReference type="InterPro" id="IPR017491">
    <property type="entry name" value="PSI_PsaC"/>
</dbReference>
<dbReference type="NCBIfam" id="TIGR03048">
    <property type="entry name" value="PS_I_psaC"/>
    <property type="match status" value="1"/>
</dbReference>
<dbReference type="PANTHER" id="PTHR24960:SF79">
    <property type="entry name" value="PHOTOSYSTEM I IRON-SULFUR CENTER"/>
    <property type="match status" value="1"/>
</dbReference>
<dbReference type="PANTHER" id="PTHR24960">
    <property type="entry name" value="PHOTOSYSTEM I IRON-SULFUR CENTER-RELATED"/>
    <property type="match status" value="1"/>
</dbReference>
<dbReference type="Pfam" id="PF14697">
    <property type="entry name" value="Fer4_21"/>
    <property type="match status" value="1"/>
</dbReference>
<dbReference type="SUPFAM" id="SSF54862">
    <property type="entry name" value="4Fe-4S ferredoxins"/>
    <property type="match status" value="1"/>
</dbReference>
<dbReference type="PROSITE" id="PS00198">
    <property type="entry name" value="4FE4S_FER_1"/>
    <property type="match status" value="2"/>
</dbReference>
<dbReference type="PROSITE" id="PS51379">
    <property type="entry name" value="4FE4S_FER_2"/>
    <property type="match status" value="2"/>
</dbReference>
<evidence type="ECO:0000250" key="1"/>
<evidence type="ECO:0000255" key="2">
    <source>
        <dbReference type="HAMAP-Rule" id="MF_01303"/>
    </source>
</evidence>
<geneLocation type="chloroplast"/>